<reference key="1">
    <citation type="journal article" date="2008" name="BMC Genomics">
        <title>Complete genome of Phenylobacterium zucineum - a novel facultative intracellular bacterium isolated from human erythroleukemia cell line K562.</title>
        <authorList>
            <person name="Luo Y."/>
            <person name="Xu X."/>
            <person name="Ding Z."/>
            <person name="Liu Z."/>
            <person name="Zhang B."/>
            <person name="Yan Z."/>
            <person name="Sun J."/>
            <person name="Hu S."/>
            <person name="Hu X."/>
        </authorList>
    </citation>
    <scope>NUCLEOTIDE SEQUENCE [LARGE SCALE GENOMIC DNA]</scope>
    <source>
        <strain>HLK1</strain>
    </source>
</reference>
<sequence length="41" mass="4886">MKVRSSLKSLKTRHRDCKLVRRKGRVYVINKTDPRFKAKQG</sequence>
<organism>
    <name type="scientific">Phenylobacterium zucineum (strain HLK1)</name>
    <dbReference type="NCBI Taxonomy" id="450851"/>
    <lineage>
        <taxon>Bacteria</taxon>
        <taxon>Pseudomonadati</taxon>
        <taxon>Pseudomonadota</taxon>
        <taxon>Alphaproteobacteria</taxon>
        <taxon>Caulobacterales</taxon>
        <taxon>Caulobacteraceae</taxon>
        <taxon>Phenylobacterium</taxon>
    </lineage>
</organism>
<feature type="chain" id="PRO_1000101054" description="Large ribosomal subunit protein bL36">
    <location>
        <begin position="1"/>
        <end position="41"/>
    </location>
</feature>
<protein>
    <recommendedName>
        <fullName evidence="1">Large ribosomal subunit protein bL36</fullName>
    </recommendedName>
    <alternativeName>
        <fullName evidence="2">50S ribosomal protein L36</fullName>
    </alternativeName>
</protein>
<evidence type="ECO:0000255" key="1">
    <source>
        <dbReference type="HAMAP-Rule" id="MF_00251"/>
    </source>
</evidence>
<evidence type="ECO:0000305" key="2"/>
<keyword id="KW-1185">Reference proteome</keyword>
<keyword id="KW-0687">Ribonucleoprotein</keyword>
<keyword id="KW-0689">Ribosomal protein</keyword>
<dbReference type="EMBL" id="CP000747">
    <property type="protein sequence ID" value="ACG79529.1"/>
    <property type="molecule type" value="Genomic_DNA"/>
</dbReference>
<dbReference type="SMR" id="B4RA25"/>
<dbReference type="STRING" id="450851.PHZ_c3120"/>
<dbReference type="KEGG" id="pzu:PHZ_c3120"/>
<dbReference type="eggNOG" id="COG0257">
    <property type="taxonomic scope" value="Bacteria"/>
</dbReference>
<dbReference type="HOGENOM" id="CLU_135723_3_2_5"/>
<dbReference type="OrthoDB" id="9801558at2"/>
<dbReference type="Proteomes" id="UP000001868">
    <property type="component" value="Chromosome"/>
</dbReference>
<dbReference type="GO" id="GO:1990904">
    <property type="term" value="C:ribonucleoprotein complex"/>
    <property type="evidence" value="ECO:0007669"/>
    <property type="project" value="UniProtKB-KW"/>
</dbReference>
<dbReference type="GO" id="GO:0005840">
    <property type="term" value="C:ribosome"/>
    <property type="evidence" value="ECO:0007669"/>
    <property type="project" value="UniProtKB-KW"/>
</dbReference>
<dbReference type="GO" id="GO:0003735">
    <property type="term" value="F:structural constituent of ribosome"/>
    <property type="evidence" value="ECO:0007669"/>
    <property type="project" value="InterPro"/>
</dbReference>
<dbReference type="GO" id="GO:0006412">
    <property type="term" value="P:translation"/>
    <property type="evidence" value="ECO:0007669"/>
    <property type="project" value="UniProtKB-UniRule"/>
</dbReference>
<dbReference type="HAMAP" id="MF_00251">
    <property type="entry name" value="Ribosomal_bL36"/>
    <property type="match status" value="1"/>
</dbReference>
<dbReference type="InterPro" id="IPR000473">
    <property type="entry name" value="Ribosomal_bL36"/>
</dbReference>
<dbReference type="InterPro" id="IPR035977">
    <property type="entry name" value="Ribosomal_bL36_sp"/>
</dbReference>
<dbReference type="InterPro" id="IPR047621">
    <property type="entry name" value="Ribosomal_L36_bact"/>
</dbReference>
<dbReference type="NCBIfam" id="NF002021">
    <property type="entry name" value="PRK00831.1"/>
    <property type="match status" value="1"/>
</dbReference>
<dbReference type="NCBIfam" id="TIGR01022">
    <property type="entry name" value="rpmJ_bact"/>
    <property type="match status" value="1"/>
</dbReference>
<dbReference type="PANTHER" id="PTHR47781">
    <property type="entry name" value="50S RIBOSOMAL PROTEIN L36 2"/>
    <property type="match status" value="1"/>
</dbReference>
<dbReference type="PANTHER" id="PTHR47781:SF1">
    <property type="entry name" value="LARGE RIBOSOMAL SUBUNIT PROTEIN BL36B"/>
    <property type="match status" value="1"/>
</dbReference>
<dbReference type="Pfam" id="PF00444">
    <property type="entry name" value="Ribosomal_L36"/>
    <property type="match status" value="1"/>
</dbReference>
<dbReference type="SUPFAM" id="SSF57840">
    <property type="entry name" value="Ribosomal protein L36"/>
    <property type="match status" value="1"/>
</dbReference>
<dbReference type="PROSITE" id="PS00828">
    <property type="entry name" value="RIBOSOMAL_L36"/>
    <property type="match status" value="1"/>
</dbReference>
<gene>
    <name evidence="1" type="primary">rpmJ</name>
    <name type="ordered locus">PHZ_c3120</name>
</gene>
<name>RL36_PHEZH</name>
<accession>B4RA25</accession>
<proteinExistence type="inferred from homology"/>
<comment type="similarity">
    <text evidence="1">Belongs to the bacterial ribosomal protein bL36 family.</text>
</comment>